<keyword id="KW-1185">Reference proteome</keyword>
<comment type="similarity">
    <text evidence="2">Belongs to the Speedy/Ringo family.</text>
</comment>
<sequence>MDRTETRFRKRGQITEKITTSRQPQPQNEQSPQRSTSGYPLQEVVDDEVLGPSAPGVDPSPPCRSLGWKRKREWSDESAEEPEKELAPEPEETWVVEMLCGLKMKLKQQRVSPILPEHHKGFNSQLAPGVDPSPPHRSFCWKRKMEWWDESEESLEEEPRKVLAPEPEEIWVAEMLCGLKMKLKRRRVSLVLPEHHEAFNRLLEDPVIKRFLAWDKDLRVSDKYLLAMVIAYFSRAGFPSWQYQRIHFFLALYLANDMEEDDEDSKQNIFHFLYGKNRSRIPLLRKRWFQLGRSMNPRARKKRSRIPLLRKRRFQLGRSMNPRARKNRSRIPLLRKRRFQLGRSMNLRARKNRSQIVLFQKRRFQFFCSMSGRAWVSPEELEEIQAYDPEHWVWARDRAHLS</sequence>
<feature type="chain" id="PRO_0000328811" description="Speedy protein E5">
    <location>
        <begin position="1"/>
        <end position="402"/>
    </location>
</feature>
<feature type="region of interest" description="Disordered" evidence="1">
    <location>
        <begin position="1"/>
        <end position="89"/>
    </location>
</feature>
<feature type="compositionally biased region" description="Polar residues" evidence="1">
    <location>
        <begin position="16"/>
        <end position="39"/>
    </location>
</feature>
<feature type="compositionally biased region" description="Acidic residues" evidence="1">
    <location>
        <begin position="76"/>
        <end position="89"/>
    </location>
</feature>
<evidence type="ECO:0000256" key="1">
    <source>
        <dbReference type="SAM" id="MobiDB-lite"/>
    </source>
</evidence>
<evidence type="ECO:0000305" key="2"/>
<dbReference type="EMBL" id="AC211429">
    <property type="status" value="NOT_ANNOTATED_CDS"/>
    <property type="molecule type" value="Genomic_DNA"/>
</dbReference>
<dbReference type="CCDS" id="CCDS78241.1"/>
<dbReference type="RefSeq" id="NP_001293070.1">
    <property type="nucleotide sequence ID" value="NM_001306141.4"/>
</dbReference>
<dbReference type="RefSeq" id="XP_047276364.1">
    <property type="nucleotide sequence ID" value="XM_047420408.1"/>
</dbReference>
<dbReference type="SMR" id="A6NIY4"/>
<dbReference type="FunCoup" id="A6NIY4">
    <property type="interactions" value="158"/>
</dbReference>
<dbReference type="STRING" id="9606.ENSP00000485398"/>
<dbReference type="iPTMnet" id="A6NIY4"/>
<dbReference type="PhosphoSitePlus" id="A6NIY4"/>
<dbReference type="BioMuta" id="SPDYE5"/>
<dbReference type="MassIVE" id="A6NIY4"/>
<dbReference type="PaxDb" id="9606-ENSP00000485398"/>
<dbReference type="PeptideAtlas" id="A6NIY4"/>
<dbReference type="Antibodypedia" id="74587">
    <property type="antibodies" value="49 antibodies from 7 providers"/>
</dbReference>
<dbReference type="DNASU" id="442590"/>
<dbReference type="Ensembl" id="ENST00000625065.4">
    <property type="protein sequence ID" value="ENSP00000485398.1"/>
    <property type="gene ID" value="ENSG00000170092.15"/>
</dbReference>
<dbReference type="GeneID" id="442590"/>
<dbReference type="KEGG" id="hsa:442590"/>
<dbReference type="MANE-Select" id="ENST00000625065.4">
    <property type="protein sequence ID" value="ENSP00000485398.1"/>
    <property type="RefSeq nucleotide sequence ID" value="NM_001306141.4"/>
    <property type="RefSeq protein sequence ID" value="NP_001293070.1"/>
</dbReference>
<dbReference type="UCSC" id="uc064emj.1">
    <property type="organism name" value="human"/>
</dbReference>
<dbReference type="AGR" id="HGNC:35464"/>
<dbReference type="CTD" id="442590"/>
<dbReference type="GeneCards" id="SPDYE5"/>
<dbReference type="HGNC" id="HGNC:35464">
    <property type="gene designation" value="SPDYE5"/>
</dbReference>
<dbReference type="HPA" id="ENSG00000170092">
    <property type="expression patterns" value="Not detected"/>
</dbReference>
<dbReference type="neXtProt" id="NX_A6NIY4"/>
<dbReference type="OpenTargets" id="ENSG00000170092"/>
<dbReference type="PharmGKB" id="PA164726251"/>
<dbReference type="VEuPathDB" id="HostDB:ENSG00000170092"/>
<dbReference type="eggNOG" id="ENOG502SSQN">
    <property type="taxonomic scope" value="Eukaryota"/>
</dbReference>
<dbReference type="GeneTree" id="ENSGT00940000154173"/>
<dbReference type="InParanoid" id="A6NIY4"/>
<dbReference type="OMA" id="VWERERH"/>
<dbReference type="OrthoDB" id="83849at9443"/>
<dbReference type="PAN-GO" id="A6NIY4">
    <property type="GO annotations" value="1 GO annotation based on evolutionary models"/>
</dbReference>
<dbReference type="PhylomeDB" id="A6NIY4"/>
<dbReference type="PathwayCommons" id="A6NIY4"/>
<dbReference type="BioGRID-ORCS" id="442590">
    <property type="hits" value="42 hits in 233 CRISPR screens"/>
</dbReference>
<dbReference type="ChiTaRS" id="SPDYE5">
    <property type="organism name" value="human"/>
</dbReference>
<dbReference type="GenomeRNAi" id="442590"/>
<dbReference type="Pharos" id="A6NIY4">
    <property type="development level" value="Tdark"/>
</dbReference>
<dbReference type="PRO" id="PR:A6NIY4"/>
<dbReference type="Proteomes" id="UP000005640">
    <property type="component" value="Chromosome 7"/>
</dbReference>
<dbReference type="RNAct" id="A6NIY4">
    <property type="molecule type" value="protein"/>
</dbReference>
<dbReference type="Bgee" id="ENSG00000170092">
    <property type="expression patterns" value="Expressed in male germ line stem cell (sensu Vertebrata) in testis and 101 other cell types or tissues"/>
</dbReference>
<dbReference type="ExpressionAtlas" id="A6NIY4">
    <property type="expression patterns" value="baseline and differential"/>
</dbReference>
<dbReference type="GO" id="GO:0019901">
    <property type="term" value="F:protein kinase binding"/>
    <property type="evidence" value="ECO:0000318"/>
    <property type="project" value="GO_Central"/>
</dbReference>
<dbReference type="InterPro" id="IPR020984">
    <property type="entry name" value="Speedy"/>
</dbReference>
<dbReference type="PANTHER" id="PTHR31156">
    <property type="entry name" value="WBSCR19-LIKE PROTEIN"/>
    <property type="match status" value="1"/>
</dbReference>
<dbReference type="Pfam" id="PF11357">
    <property type="entry name" value="Spy1"/>
    <property type="match status" value="2"/>
</dbReference>
<gene>
    <name type="primary">SPDYE5</name>
</gene>
<proteinExistence type="inferred from homology"/>
<organism>
    <name type="scientific">Homo sapiens</name>
    <name type="common">Human</name>
    <dbReference type="NCBI Taxonomy" id="9606"/>
    <lineage>
        <taxon>Eukaryota</taxon>
        <taxon>Metazoa</taxon>
        <taxon>Chordata</taxon>
        <taxon>Craniata</taxon>
        <taxon>Vertebrata</taxon>
        <taxon>Euteleostomi</taxon>
        <taxon>Mammalia</taxon>
        <taxon>Eutheria</taxon>
        <taxon>Euarchontoglires</taxon>
        <taxon>Primates</taxon>
        <taxon>Haplorrhini</taxon>
        <taxon>Catarrhini</taxon>
        <taxon>Hominidae</taxon>
        <taxon>Homo</taxon>
    </lineage>
</organism>
<name>SPDE5_HUMAN</name>
<protein>
    <recommendedName>
        <fullName>Speedy protein E5</fullName>
    </recommendedName>
</protein>
<accession>A6NIY4</accession>
<accession>A0A096LPK5</accession>
<reference key="1">
    <citation type="journal article" date="2003" name="Nature">
        <title>The DNA sequence of human chromosome 7.</title>
        <authorList>
            <person name="Hillier L.W."/>
            <person name="Fulton R.S."/>
            <person name="Fulton L.A."/>
            <person name="Graves T.A."/>
            <person name="Pepin K.H."/>
            <person name="Wagner-McPherson C."/>
            <person name="Layman D."/>
            <person name="Maas J."/>
            <person name="Jaeger S."/>
            <person name="Walker R."/>
            <person name="Wylie K."/>
            <person name="Sekhon M."/>
            <person name="Becker M.C."/>
            <person name="O'Laughlin M.D."/>
            <person name="Schaller M.E."/>
            <person name="Fewell G.A."/>
            <person name="Delehaunty K.D."/>
            <person name="Miner T.L."/>
            <person name="Nash W.E."/>
            <person name="Cordes M."/>
            <person name="Du H."/>
            <person name="Sun H."/>
            <person name="Edwards J."/>
            <person name="Bradshaw-Cordum H."/>
            <person name="Ali J."/>
            <person name="Andrews S."/>
            <person name="Isak A."/>
            <person name="Vanbrunt A."/>
            <person name="Nguyen C."/>
            <person name="Du F."/>
            <person name="Lamar B."/>
            <person name="Courtney L."/>
            <person name="Kalicki J."/>
            <person name="Ozersky P."/>
            <person name="Bielicki L."/>
            <person name="Scott K."/>
            <person name="Holmes A."/>
            <person name="Harkins R."/>
            <person name="Harris A."/>
            <person name="Strong C.M."/>
            <person name="Hou S."/>
            <person name="Tomlinson C."/>
            <person name="Dauphin-Kohlberg S."/>
            <person name="Kozlowicz-Reilly A."/>
            <person name="Leonard S."/>
            <person name="Rohlfing T."/>
            <person name="Rock S.M."/>
            <person name="Tin-Wollam A.-M."/>
            <person name="Abbott A."/>
            <person name="Minx P."/>
            <person name="Maupin R."/>
            <person name="Strowmatt C."/>
            <person name="Latreille P."/>
            <person name="Miller N."/>
            <person name="Johnson D."/>
            <person name="Murray J."/>
            <person name="Woessner J.P."/>
            <person name="Wendl M.C."/>
            <person name="Yang S.-P."/>
            <person name="Schultz B.R."/>
            <person name="Wallis J.W."/>
            <person name="Spieth J."/>
            <person name="Bieri T.A."/>
            <person name="Nelson J.O."/>
            <person name="Berkowicz N."/>
            <person name="Wohldmann P.E."/>
            <person name="Cook L.L."/>
            <person name="Hickenbotham M.T."/>
            <person name="Eldred J."/>
            <person name="Williams D."/>
            <person name="Bedell J.A."/>
            <person name="Mardis E.R."/>
            <person name="Clifton S.W."/>
            <person name="Chissoe S.L."/>
            <person name="Marra M.A."/>
            <person name="Raymond C."/>
            <person name="Haugen E."/>
            <person name="Gillett W."/>
            <person name="Zhou Y."/>
            <person name="James R."/>
            <person name="Phelps K."/>
            <person name="Iadanoto S."/>
            <person name="Bubb K."/>
            <person name="Simms E."/>
            <person name="Levy R."/>
            <person name="Clendenning J."/>
            <person name="Kaul R."/>
            <person name="Kent W.J."/>
            <person name="Furey T.S."/>
            <person name="Baertsch R.A."/>
            <person name="Brent M.R."/>
            <person name="Keibler E."/>
            <person name="Flicek P."/>
            <person name="Bork P."/>
            <person name="Suyama M."/>
            <person name="Bailey J.A."/>
            <person name="Portnoy M.E."/>
            <person name="Torrents D."/>
            <person name="Chinwalla A.T."/>
            <person name="Gish W.R."/>
            <person name="Eddy S.R."/>
            <person name="McPherson J.D."/>
            <person name="Olson M.V."/>
            <person name="Eichler E.E."/>
            <person name="Green E.D."/>
            <person name="Waterston R.H."/>
            <person name="Wilson R.K."/>
        </authorList>
    </citation>
    <scope>NUCLEOTIDE SEQUENCE [LARGE SCALE GENOMIC DNA]</scope>
</reference>